<keyword id="KW-0249">Electron transport</keyword>
<keyword id="KW-0472">Membrane</keyword>
<keyword id="KW-0496">Mitochondrion</keyword>
<keyword id="KW-0999">Mitochondrion inner membrane</keyword>
<keyword id="KW-0520">NAD</keyword>
<keyword id="KW-0679">Respiratory chain</keyword>
<keyword id="KW-1278">Translocase</keyword>
<keyword id="KW-0812">Transmembrane</keyword>
<keyword id="KW-1133">Transmembrane helix</keyword>
<keyword id="KW-0813">Transport</keyword>
<keyword id="KW-0830">Ubiquinone</keyword>
<accession>Q9B996</accession>
<organism>
    <name type="scientific">Muntiacus vuquangensis</name>
    <name type="common">Giant muntjac</name>
    <name type="synonym">Megamuntiacus vuquangensis</name>
    <dbReference type="NCBI Taxonomy" id="109296"/>
    <lineage>
        <taxon>Eukaryota</taxon>
        <taxon>Metazoa</taxon>
        <taxon>Chordata</taxon>
        <taxon>Craniata</taxon>
        <taxon>Vertebrata</taxon>
        <taxon>Euteleostomi</taxon>
        <taxon>Mammalia</taxon>
        <taxon>Eutheria</taxon>
        <taxon>Laurasiatheria</taxon>
        <taxon>Artiodactyla</taxon>
        <taxon>Ruminantia</taxon>
        <taxon>Pecora</taxon>
        <taxon>Cervidae</taxon>
        <taxon>Muntiacinae</taxon>
        <taxon>Muntiacus</taxon>
    </lineage>
</organism>
<proteinExistence type="inferred from homology"/>
<feature type="chain" id="PRO_0000118451" description="NADH-ubiquinone oxidoreductase chain 4L">
    <location>
        <begin position="1"/>
        <end position="98"/>
    </location>
</feature>
<feature type="transmembrane region" description="Helical" evidence="3">
    <location>
        <begin position="1"/>
        <end position="21"/>
    </location>
</feature>
<feature type="transmembrane region" description="Helical" evidence="3">
    <location>
        <begin position="29"/>
        <end position="49"/>
    </location>
</feature>
<feature type="transmembrane region" description="Helical" evidence="3">
    <location>
        <begin position="61"/>
        <end position="81"/>
    </location>
</feature>
<comment type="function">
    <text evidence="1">Core subunit of the mitochondrial membrane respiratory chain NADH dehydrogenase (Complex I) which catalyzes electron transfer from NADH through the respiratory chain, using ubiquinone as an electron acceptor. Part of the enzyme membrane arm which is embedded in the lipid bilayer and involved in proton translocation.</text>
</comment>
<comment type="catalytic activity">
    <reaction evidence="1">
        <text>a ubiquinone + NADH + 5 H(+)(in) = a ubiquinol + NAD(+) + 4 H(+)(out)</text>
        <dbReference type="Rhea" id="RHEA:29091"/>
        <dbReference type="Rhea" id="RHEA-COMP:9565"/>
        <dbReference type="Rhea" id="RHEA-COMP:9566"/>
        <dbReference type="ChEBI" id="CHEBI:15378"/>
        <dbReference type="ChEBI" id="CHEBI:16389"/>
        <dbReference type="ChEBI" id="CHEBI:17976"/>
        <dbReference type="ChEBI" id="CHEBI:57540"/>
        <dbReference type="ChEBI" id="CHEBI:57945"/>
        <dbReference type="EC" id="7.1.1.2"/>
    </reaction>
    <physiologicalReaction direction="left-to-right" evidence="1">
        <dbReference type="Rhea" id="RHEA:29092"/>
    </physiologicalReaction>
</comment>
<comment type="subunit">
    <text evidence="2">Core subunit of respiratory chain NADH dehydrogenase (Complex I) which is composed of 45 different subunits.</text>
</comment>
<comment type="subcellular location">
    <subcellularLocation>
        <location evidence="2">Mitochondrion inner membrane</location>
        <topology evidence="3">Multi-pass membrane protein</topology>
    </subcellularLocation>
</comment>
<comment type="similarity">
    <text evidence="4">Belongs to the complex I subunit 4L family.</text>
</comment>
<dbReference type="EC" id="7.1.1.2"/>
<dbReference type="EMBL" id="AF190675">
    <property type="protein sequence ID" value="AAG59674.1"/>
    <property type="molecule type" value="Genomic_DNA"/>
</dbReference>
<dbReference type="SMR" id="Q9B996"/>
<dbReference type="GO" id="GO:0005743">
    <property type="term" value="C:mitochondrial inner membrane"/>
    <property type="evidence" value="ECO:0000250"/>
    <property type="project" value="UniProtKB"/>
</dbReference>
<dbReference type="GO" id="GO:0045271">
    <property type="term" value="C:respiratory chain complex I"/>
    <property type="evidence" value="ECO:0000250"/>
    <property type="project" value="UniProtKB"/>
</dbReference>
<dbReference type="GO" id="GO:0008137">
    <property type="term" value="F:NADH dehydrogenase (ubiquinone) activity"/>
    <property type="evidence" value="ECO:0000250"/>
    <property type="project" value="UniProtKB"/>
</dbReference>
<dbReference type="GO" id="GO:0042773">
    <property type="term" value="P:ATP synthesis coupled electron transport"/>
    <property type="evidence" value="ECO:0007669"/>
    <property type="project" value="InterPro"/>
</dbReference>
<dbReference type="FunFam" id="1.10.287.3510:FF:000002">
    <property type="entry name" value="NADH-ubiquinone oxidoreductase chain 4L"/>
    <property type="match status" value="1"/>
</dbReference>
<dbReference type="Gene3D" id="1.10.287.3510">
    <property type="match status" value="1"/>
</dbReference>
<dbReference type="InterPro" id="IPR001133">
    <property type="entry name" value="NADH_UbQ_OxRdtase_chain4L/K"/>
</dbReference>
<dbReference type="InterPro" id="IPR039428">
    <property type="entry name" value="NUOK/Mnh_C1-like"/>
</dbReference>
<dbReference type="PANTHER" id="PTHR11434:SF0">
    <property type="entry name" value="NADH-UBIQUINONE OXIDOREDUCTASE CHAIN 4L"/>
    <property type="match status" value="1"/>
</dbReference>
<dbReference type="PANTHER" id="PTHR11434">
    <property type="entry name" value="NADH-UBIQUINONE OXIDOREDUCTASE SUBUNIT ND4L"/>
    <property type="match status" value="1"/>
</dbReference>
<dbReference type="Pfam" id="PF00420">
    <property type="entry name" value="Oxidored_q2"/>
    <property type="match status" value="1"/>
</dbReference>
<reference key="1">
    <citation type="journal article" date="2000" name="Mol. Biol. Evol.">
        <title>Rapid and parallel chromosomal number reductions in muntjac deer inferred from mitochondrial DNA phylogeny.</title>
        <authorList>
            <person name="Wang W."/>
            <person name="Lan H."/>
        </authorList>
    </citation>
    <scope>NUCLEOTIDE SEQUENCE [GENOMIC DNA]</scope>
</reference>
<geneLocation type="mitochondrion"/>
<name>NU4LM_MUNVU</name>
<gene>
    <name type="primary">MT-ND4L</name>
    <name type="synonym">MTND4L</name>
    <name type="synonym">NADH4L</name>
    <name type="synonym">ND4L</name>
</gene>
<protein>
    <recommendedName>
        <fullName>NADH-ubiquinone oxidoreductase chain 4L</fullName>
        <ecNumber>7.1.1.2</ecNumber>
    </recommendedName>
    <alternativeName>
        <fullName>NADH dehydrogenase subunit 4L</fullName>
    </alternativeName>
</protein>
<sequence>MSLVYMNIMTAFMVSLAGLLMYRSHLMSSLLCLEGMMLSLFVLATLTILNSHFTLASMMPIILLVFGACEAALGLSLLVMVSNTYGTDYVQNLNLLQC</sequence>
<evidence type="ECO:0000250" key="1">
    <source>
        <dbReference type="UniProtKB" id="P03901"/>
    </source>
</evidence>
<evidence type="ECO:0000250" key="2">
    <source>
        <dbReference type="UniProtKB" id="P03902"/>
    </source>
</evidence>
<evidence type="ECO:0000255" key="3"/>
<evidence type="ECO:0000305" key="4"/>